<reference key="1">
    <citation type="submission" date="2007-03" db="EMBL/GenBank/DDBJ databases">
        <authorList>
            <person name="Heidelberg J."/>
        </authorList>
    </citation>
    <scope>NUCLEOTIDE SEQUENCE [LARGE SCALE GENOMIC DNA]</scope>
    <source>
        <strain>ATCC 39541 / Classical Ogawa 395 / O395</strain>
    </source>
</reference>
<reference key="2">
    <citation type="journal article" date="2008" name="PLoS ONE">
        <title>A recalibrated molecular clock and independent origins for the cholera pandemic clones.</title>
        <authorList>
            <person name="Feng L."/>
            <person name="Reeves P.R."/>
            <person name="Lan R."/>
            <person name="Ren Y."/>
            <person name="Gao C."/>
            <person name="Zhou Z."/>
            <person name="Ren Y."/>
            <person name="Cheng J."/>
            <person name="Wang W."/>
            <person name="Wang J."/>
            <person name="Qian W."/>
            <person name="Li D."/>
            <person name="Wang L."/>
        </authorList>
    </citation>
    <scope>NUCLEOTIDE SEQUENCE [LARGE SCALE GENOMIC DNA]</scope>
    <source>
        <strain>ATCC 39541 / Classical Ogawa 395 / O395</strain>
    </source>
</reference>
<evidence type="ECO:0000255" key="1">
    <source>
        <dbReference type="HAMAP-Rule" id="MF_01152"/>
    </source>
</evidence>
<dbReference type="EMBL" id="CP000627">
    <property type="protein sequence ID" value="ABQ20811.1"/>
    <property type="molecule type" value="Genomic_DNA"/>
</dbReference>
<dbReference type="EMBL" id="CP001235">
    <property type="protein sequence ID" value="ACP08886.1"/>
    <property type="molecule type" value="Genomic_DNA"/>
</dbReference>
<dbReference type="RefSeq" id="WP_000043914.1">
    <property type="nucleotide sequence ID" value="NZ_JAACZH010000023.1"/>
</dbReference>
<dbReference type="SMR" id="A5F362"/>
<dbReference type="GeneID" id="89515026"/>
<dbReference type="KEGG" id="vco:VC0395_A0383"/>
<dbReference type="KEGG" id="vcr:VC395_0872"/>
<dbReference type="PATRIC" id="fig|345073.21.peg.846"/>
<dbReference type="eggNOG" id="COG0484">
    <property type="taxonomic scope" value="Bacteria"/>
</dbReference>
<dbReference type="HOGENOM" id="CLU_017633_0_7_6"/>
<dbReference type="OrthoDB" id="9779889at2"/>
<dbReference type="Proteomes" id="UP000000249">
    <property type="component" value="Chromosome 2"/>
</dbReference>
<dbReference type="GO" id="GO:0005737">
    <property type="term" value="C:cytoplasm"/>
    <property type="evidence" value="ECO:0007669"/>
    <property type="project" value="UniProtKB-SubCell"/>
</dbReference>
<dbReference type="GO" id="GO:0005524">
    <property type="term" value="F:ATP binding"/>
    <property type="evidence" value="ECO:0007669"/>
    <property type="project" value="InterPro"/>
</dbReference>
<dbReference type="GO" id="GO:0031072">
    <property type="term" value="F:heat shock protein binding"/>
    <property type="evidence" value="ECO:0007669"/>
    <property type="project" value="InterPro"/>
</dbReference>
<dbReference type="GO" id="GO:0051082">
    <property type="term" value="F:unfolded protein binding"/>
    <property type="evidence" value="ECO:0007669"/>
    <property type="project" value="UniProtKB-UniRule"/>
</dbReference>
<dbReference type="GO" id="GO:0008270">
    <property type="term" value="F:zinc ion binding"/>
    <property type="evidence" value="ECO:0007669"/>
    <property type="project" value="UniProtKB-UniRule"/>
</dbReference>
<dbReference type="GO" id="GO:0051085">
    <property type="term" value="P:chaperone cofactor-dependent protein refolding"/>
    <property type="evidence" value="ECO:0007669"/>
    <property type="project" value="TreeGrafter"/>
</dbReference>
<dbReference type="GO" id="GO:0006260">
    <property type="term" value="P:DNA replication"/>
    <property type="evidence" value="ECO:0007669"/>
    <property type="project" value="UniProtKB-KW"/>
</dbReference>
<dbReference type="GO" id="GO:0042026">
    <property type="term" value="P:protein refolding"/>
    <property type="evidence" value="ECO:0007669"/>
    <property type="project" value="TreeGrafter"/>
</dbReference>
<dbReference type="GO" id="GO:0009408">
    <property type="term" value="P:response to heat"/>
    <property type="evidence" value="ECO:0007669"/>
    <property type="project" value="InterPro"/>
</dbReference>
<dbReference type="CDD" id="cd06257">
    <property type="entry name" value="DnaJ"/>
    <property type="match status" value="1"/>
</dbReference>
<dbReference type="CDD" id="cd10747">
    <property type="entry name" value="DnaJ_C"/>
    <property type="match status" value="1"/>
</dbReference>
<dbReference type="CDD" id="cd10719">
    <property type="entry name" value="DnaJ_zf"/>
    <property type="match status" value="1"/>
</dbReference>
<dbReference type="FunFam" id="1.10.287.110:FF:000003">
    <property type="entry name" value="Molecular chaperone DnaJ"/>
    <property type="match status" value="1"/>
</dbReference>
<dbReference type="FunFam" id="2.10.230.10:FF:000002">
    <property type="entry name" value="Molecular chaperone DnaJ"/>
    <property type="match status" value="1"/>
</dbReference>
<dbReference type="FunFam" id="2.60.260.20:FF:000004">
    <property type="entry name" value="Molecular chaperone DnaJ"/>
    <property type="match status" value="1"/>
</dbReference>
<dbReference type="Gene3D" id="1.10.287.110">
    <property type="entry name" value="DnaJ domain"/>
    <property type="match status" value="1"/>
</dbReference>
<dbReference type="Gene3D" id="2.10.230.10">
    <property type="entry name" value="Heat shock protein DnaJ, cysteine-rich domain"/>
    <property type="match status" value="1"/>
</dbReference>
<dbReference type="Gene3D" id="2.60.260.20">
    <property type="entry name" value="Urease metallochaperone UreE, N-terminal domain"/>
    <property type="match status" value="2"/>
</dbReference>
<dbReference type="HAMAP" id="MF_01152">
    <property type="entry name" value="DnaJ"/>
    <property type="match status" value="1"/>
</dbReference>
<dbReference type="InterPro" id="IPR012724">
    <property type="entry name" value="DnaJ"/>
</dbReference>
<dbReference type="InterPro" id="IPR002939">
    <property type="entry name" value="DnaJ_C"/>
</dbReference>
<dbReference type="InterPro" id="IPR001623">
    <property type="entry name" value="DnaJ_domain"/>
</dbReference>
<dbReference type="InterPro" id="IPR018253">
    <property type="entry name" value="DnaJ_domain_CS"/>
</dbReference>
<dbReference type="InterPro" id="IPR008971">
    <property type="entry name" value="HSP40/DnaJ_pept-bd"/>
</dbReference>
<dbReference type="InterPro" id="IPR001305">
    <property type="entry name" value="HSP_DnaJ_Cys-rich_dom"/>
</dbReference>
<dbReference type="InterPro" id="IPR036410">
    <property type="entry name" value="HSP_DnaJ_Cys-rich_dom_sf"/>
</dbReference>
<dbReference type="InterPro" id="IPR036869">
    <property type="entry name" value="J_dom_sf"/>
</dbReference>
<dbReference type="NCBIfam" id="TIGR02349">
    <property type="entry name" value="DnaJ_bact"/>
    <property type="match status" value="1"/>
</dbReference>
<dbReference type="NCBIfam" id="NF008035">
    <property type="entry name" value="PRK10767.1"/>
    <property type="match status" value="1"/>
</dbReference>
<dbReference type="PANTHER" id="PTHR43096:SF48">
    <property type="entry name" value="CHAPERONE PROTEIN DNAJ"/>
    <property type="match status" value="1"/>
</dbReference>
<dbReference type="PANTHER" id="PTHR43096">
    <property type="entry name" value="DNAJ HOMOLOG 1, MITOCHONDRIAL-RELATED"/>
    <property type="match status" value="1"/>
</dbReference>
<dbReference type="Pfam" id="PF00226">
    <property type="entry name" value="DnaJ"/>
    <property type="match status" value="1"/>
</dbReference>
<dbReference type="Pfam" id="PF01556">
    <property type="entry name" value="DnaJ_C"/>
    <property type="match status" value="1"/>
</dbReference>
<dbReference type="Pfam" id="PF00684">
    <property type="entry name" value="DnaJ_CXXCXGXG"/>
    <property type="match status" value="1"/>
</dbReference>
<dbReference type="PRINTS" id="PR00625">
    <property type="entry name" value="JDOMAIN"/>
</dbReference>
<dbReference type="SMART" id="SM00271">
    <property type="entry name" value="DnaJ"/>
    <property type="match status" value="1"/>
</dbReference>
<dbReference type="SUPFAM" id="SSF46565">
    <property type="entry name" value="Chaperone J-domain"/>
    <property type="match status" value="1"/>
</dbReference>
<dbReference type="SUPFAM" id="SSF57938">
    <property type="entry name" value="DnaJ/Hsp40 cysteine-rich domain"/>
    <property type="match status" value="1"/>
</dbReference>
<dbReference type="SUPFAM" id="SSF49493">
    <property type="entry name" value="HSP40/DnaJ peptide-binding domain"/>
    <property type="match status" value="2"/>
</dbReference>
<dbReference type="PROSITE" id="PS00636">
    <property type="entry name" value="DNAJ_1"/>
    <property type="match status" value="1"/>
</dbReference>
<dbReference type="PROSITE" id="PS50076">
    <property type="entry name" value="DNAJ_2"/>
    <property type="match status" value="1"/>
</dbReference>
<dbReference type="PROSITE" id="PS51188">
    <property type="entry name" value="ZF_CR"/>
    <property type="match status" value="1"/>
</dbReference>
<keyword id="KW-0143">Chaperone</keyword>
<keyword id="KW-0963">Cytoplasm</keyword>
<keyword id="KW-0235">DNA replication</keyword>
<keyword id="KW-0479">Metal-binding</keyword>
<keyword id="KW-0677">Repeat</keyword>
<keyword id="KW-0346">Stress response</keyword>
<keyword id="KW-0862">Zinc</keyword>
<keyword id="KW-0863">Zinc-finger</keyword>
<name>DNAJ_VIBC3</name>
<sequence>MSKRDFYEVLGVGRDASERDIKKAYKRLAMKYHPDRNSGDAGAAEKFKEVKEAYEILTDAQKKAAYDQYGHAAFEQGAGGFGGGGFGGGGADFGDIFGDVFGDIFGGGRRGGGPRAQRGSDLRYNMELSLEEAVRGCSKEIEVPTLVHCDACDGSGAKKGTSAQTCGTCHGHGQVQMRQGFFAVQQTCPTCHGKGKIIKDPCNVCHGQGRKQKTKTLNVKIPAGVDTGDRIRLSGEGEAGEMGAPAGDLYVQVHVKEHHIFERDGNNLYCEVPVSFAMAALGGEVEVPTLDGRVSLKVPAETQTGRMFRMRGKGVKGVRSAALGDLIVKLVVETPVNLSARQKELLKEFEESCGGEAATKHKPKAEGFFNGVKKFFDDLTS</sequence>
<comment type="function">
    <text evidence="1">Participates actively in the response to hyperosmotic and heat shock by preventing the aggregation of stress-denatured proteins and by disaggregating proteins, also in an autonomous, DnaK-independent fashion. Unfolded proteins bind initially to DnaJ; upon interaction with the DnaJ-bound protein, DnaK hydrolyzes its bound ATP, resulting in the formation of a stable complex. GrpE releases ADP from DnaK; ATP binding to DnaK triggers the release of the substrate protein, thus completing the reaction cycle. Several rounds of ATP-dependent interactions between DnaJ, DnaK and GrpE are required for fully efficient folding. Also involved, together with DnaK and GrpE, in the DNA replication of plasmids through activation of initiation proteins.</text>
</comment>
<comment type="cofactor">
    <cofactor evidence="1">
        <name>Zn(2+)</name>
        <dbReference type="ChEBI" id="CHEBI:29105"/>
    </cofactor>
    <text evidence="1">Binds 2 Zn(2+) ions per monomer.</text>
</comment>
<comment type="subunit">
    <text evidence="1">Homodimer.</text>
</comment>
<comment type="subcellular location">
    <subcellularLocation>
        <location evidence="1">Cytoplasm</location>
    </subcellularLocation>
</comment>
<comment type="domain">
    <text evidence="1">The J domain is necessary and sufficient to stimulate DnaK ATPase activity. Zinc center 1 plays an important role in the autonomous, DnaK-independent chaperone activity of DnaJ. Zinc center 2 is essential for interaction with DnaK and for DnaJ activity.</text>
</comment>
<comment type="similarity">
    <text evidence="1">Belongs to the DnaJ family.</text>
</comment>
<feature type="chain" id="PRO_1000085327" description="Chaperone protein DnaJ">
    <location>
        <begin position="1"/>
        <end position="381"/>
    </location>
</feature>
<feature type="domain" description="J" evidence="1">
    <location>
        <begin position="5"/>
        <end position="70"/>
    </location>
</feature>
<feature type="repeat" description="CXXCXGXG motif">
    <location>
        <begin position="149"/>
        <end position="156"/>
    </location>
</feature>
<feature type="repeat" description="CXXCXGXG motif">
    <location>
        <begin position="166"/>
        <end position="173"/>
    </location>
</feature>
<feature type="repeat" description="CXXCXGXG motif">
    <location>
        <begin position="188"/>
        <end position="195"/>
    </location>
</feature>
<feature type="repeat" description="CXXCXGXG motif">
    <location>
        <begin position="202"/>
        <end position="209"/>
    </location>
</feature>
<feature type="zinc finger region" description="CR-type" evidence="1">
    <location>
        <begin position="136"/>
        <end position="214"/>
    </location>
</feature>
<feature type="binding site" evidence="1">
    <location>
        <position position="149"/>
    </location>
    <ligand>
        <name>Zn(2+)</name>
        <dbReference type="ChEBI" id="CHEBI:29105"/>
        <label>1</label>
    </ligand>
</feature>
<feature type="binding site" evidence="1">
    <location>
        <position position="152"/>
    </location>
    <ligand>
        <name>Zn(2+)</name>
        <dbReference type="ChEBI" id="CHEBI:29105"/>
        <label>1</label>
    </ligand>
</feature>
<feature type="binding site" evidence="1">
    <location>
        <position position="166"/>
    </location>
    <ligand>
        <name>Zn(2+)</name>
        <dbReference type="ChEBI" id="CHEBI:29105"/>
        <label>2</label>
    </ligand>
</feature>
<feature type="binding site" evidence="1">
    <location>
        <position position="169"/>
    </location>
    <ligand>
        <name>Zn(2+)</name>
        <dbReference type="ChEBI" id="CHEBI:29105"/>
        <label>2</label>
    </ligand>
</feature>
<feature type="binding site" evidence="1">
    <location>
        <position position="188"/>
    </location>
    <ligand>
        <name>Zn(2+)</name>
        <dbReference type="ChEBI" id="CHEBI:29105"/>
        <label>2</label>
    </ligand>
</feature>
<feature type="binding site" evidence="1">
    <location>
        <position position="191"/>
    </location>
    <ligand>
        <name>Zn(2+)</name>
        <dbReference type="ChEBI" id="CHEBI:29105"/>
        <label>2</label>
    </ligand>
</feature>
<feature type="binding site" evidence="1">
    <location>
        <position position="202"/>
    </location>
    <ligand>
        <name>Zn(2+)</name>
        <dbReference type="ChEBI" id="CHEBI:29105"/>
        <label>1</label>
    </ligand>
</feature>
<feature type="binding site" evidence="1">
    <location>
        <position position="205"/>
    </location>
    <ligand>
        <name>Zn(2+)</name>
        <dbReference type="ChEBI" id="CHEBI:29105"/>
        <label>1</label>
    </ligand>
</feature>
<proteinExistence type="inferred from homology"/>
<organism>
    <name type="scientific">Vibrio cholerae serotype O1 (strain ATCC 39541 / Classical Ogawa 395 / O395)</name>
    <dbReference type="NCBI Taxonomy" id="345073"/>
    <lineage>
        <taxon>Bacteria</taxon>
        <taxon>Pseudomonadati</taxon>
        <taxon>Pseudomonadota</taxon>
        <taxon>Gammaproteobacteria</taxon>
        <taxon>Vibrionales</taxon>
        <taxon>Vibrionaceae</taxon>
        <taxon>Vibrio</taxon>
    </lineage>
</organism>
<accession>A5F362</accession>
<accession>C3LYM0</accession>
<protein>
    <recommendedName>
        <fullName evidence="1">Chaperone protein DnaJ</fullName>
    </recommendedName>
</protein>
<gene>
    <name evidence="1" type="primary">dnaJ</name>
    <name type="ordered locus">VC0395_A0383</name>
    <name type="ordered locus">VC395_0872</name>
</gene>